<name>YADS_ECOLI</name>
<feature type="chain" id="PRO_0000166297" description="UPF0126 inner membrane protein YadS">
    <location>
        <begin position="1"/>
        <end position="207"/>
    </location>
</feature>
<feature type="transmembrane region" description="Helical" evidence="1">
    <location>
        <begin position="1"/>
        <end position="21"/>
    </location>
</feature>
<feature type="topological domain" description="Cytoplasmic" evidence="1">
    <location>
        <begin position="22"/>
        <end position="29"/>
    </location>
</feature>
<feature type="transmembrane region" description="Helical" evidence="1">
    <location>
        <begin position="30"/>
        <end position="50"/>
    </location>
</feature>
<feature type="topological domain" description="Periplasmic" evidence="1">
    <location>
        <begin position="51"/>
        <end position="58"/>
    </location>
</feature>
<feature type="transmembrane region" description="Helical" evidence="1">
    <location>
        <begin position="59"/>
        <end position="79"/>
    </location>
</feature>
<feature type="topological domain" description="Cytoplasmic" evidence="1">
    <location>
        <begin position="80"/>
        <end position="85"/>
    </location>
</feature>
<feature type="transmembrane region" description="Helical" evidence="1">
    <location>
        <begin position="86"/>
        <end position="106"/>
    </location>
</feature>
<feature type="topological domain" description="Periplasmic" evidence="1">
    <location>
        <begin position="107"/>
        <end position="112"/>
    </location>
</feature>
<feature type="transmembrane region" description="Helical" evidence="1">
    <location>
        <begin position="113"/>
        <end position="133"/>
    </location>
</feature>
<feature type="topological domain" description="Cytoplasmic" evidence="1">
    <location>
        <begin position="134"/>
        <end position="148"/>
    </location>
</feature>
<feature type="transmembrane region" description="Helical" evidence="1">
    <location>
        <begin position="149"/>
        <end position="169"/>
    </location>
</feature>
<feature type="topological domain" description="Periplasmic" evidence="1">
    <location>
        <position position="170"/>
    </location>
</feature>
<feature type="transmembrane region" description="Helical" evidence="1">
    <location>
        <begin position="171"/>
        <end position="191"/>
    </location>
</feature>
<feature type="topological domain" description="Cytoplasmic" evidence="1">
    <location>
        <begin position="192"/>
        <end position="207"/>
    </location>
</feature>
<protein>
    <recommendedName>
        <fullName>UPF0126 inner membrane protein YadS</fullName>
    </recommendedName>
</protein>
<organism>
    <name type="scientific">Escherichia coli (strain K12)</name>
    <dbReference type="NCBI Taxonomy" id="83333"/>
    <lineage>
        <taxon>Bacteria</taxon>
        <taxon>Pseudomonadati</taxon>
        <taxon>Pseudomonadota</taxon>
        <taxon>Gammaproteobacteria</taxon>
        <taxon>Enterobacterales</taxon>
        <taxon>Enterobacteriaceae</taxon>
        <taxon>Escherichia</taxon>
    </lineage>
</organism>
<evidence type="ECO:0000255" key="1"/>
<evidence type="ECO:0000305" key="2"/>
<keyword id="KW-0997">Cell inner membrane</keyword>
<keyword id="KW-1003">Cell membrane</keyword>
<keyword id="KW-0472">Membrane</keyword>
<keyword id="KW-1185">Reference proteome</keyword>
<keyword id="KW-0812">Transmembrane</keyword>
<keyword id="KW-1133">Transmembrane helix</keyword>
<sequence>MLVYWLDIVGTAVFAISGVLLAGKLRMDPFGVLVLGVVTAVGGGTIRDMALDHGPVFWVKDPTDLVVAMVTSMLTIVLVRQPRRLPKWMLPVLDAVGLAVFVGIGVNKAFNAEAGPLIAVCMGVITGVGGGIIRDVLAREIPMILRTEIYATACIIGGIVHATAYYTFSVPLETASMMGMVVTLLIRLAAIRWHLKLPTFALDENGR</sequence>
<reference key="1">
    <citation type="journal article" date="1994" name="Nucleic Acids Res.">
        <title>Systematic sequencing of the Escherichia coli genome: analysis of the 2.4-4.1 min (110,917-193,643 bp) region.</title>
        <authorList>
            <person name="Fujita N."/>
            <person name="Mori H."/>
            <person name="Yura T."/>
            <person name="Ishihama A."/>
        </authorList>
    </citation>
    <scope>NUCLEOTIDE SEQUENCE [LARGE SCALE GENOMIC DNA]</scope>
    <source>
        <strain>K12 / W3110 / ATCC 27325 / DSM 5911</strain>
    </source>
</reference>
<reference key="2">
    <citation type="submission" date="1997-01" db="EMBL/GenBank/DDBJ databases">
        <title>Sequence of minutes 4-25 of Escherichia coli.</title>
        <authorList>
            <person name="Chung E."/>
            <person name="Allen E."/>
            <person name="Araujo R."/>
            <person name="Aparicio A.M."/>
            <person name="Davis K."/>
            <person name="Duncan M."/>
            <person name="Federspiel N."/>
            <person name="Hyman R."/>
            <person name="Kalman S."/>
            <person name="Komp C."/>
            <person name="Kurdi O."/>
            <person name="Lew H."/>
            <person name="Lin D."/>
            <person name="Namath A."/>
            <person name="Oefner P."/>
            <person name="Roberts D."/>
            <person name="Schramm S."/>
            <person name="Davis R.W."/>
        </authorList>
    </citation>
    <scope>NUCLEOTIDE SEQUENCE [LARGE SCALE GENOMIC DNA]</scope>
    <source>
        <strain>K12 / MG1655 / ATCC 47076</strain>
    </source>
</reference>
<reference key="3">
    <citation type="journal article" date="1997" name="Science">
        <title>The complete genome sequence of Escherichia coli K-12.</title>
        <authorList>
            <person name="Blattner F.R."/>
            <person name="Plunkett G. III"/>
            <person name="Bloch C.A."/>
            <person name="Perna N.T."/>
            <person name="Burland V."/>
            <person name="Riley M."/>
            <person name="Collado-Vides J."/>
            <person name="Glasner J.D."/>
            <person name="Rode C.K."/>
            <person name="Mayhew G.F."/>
            <person name="Gregor J."/>
            <person name="Davis N.W."/>
            <person name="Kirkpatrick H.A."/>
            <person name="Goeden M.A."/>
            <person name="Rose D.J."/>
            <person name="Mau B."/>
            <person name="Shao Y."/>
        </authorList>
    </citation>
    <scope>NUCLEOTIDE SEQUENCE [LARGE SCALE GENOMIC DNA]</scope>
    <source>
        <strain>K12 / MG1655 / ATCC 47076</strain>
    </source>
</reference>
<reference key="4">
    <citation type="journal article" date="2006" name="Mol. Syst. Biol.">
        <title>Highly accurate genome sequences of Escherichia coli K-12 strains MG1655 and W3110.</title>
        <authorList>
            <person name="Hayashi K."/>
            <person name="Morooka N."/>
            <person name="Yamamoto Y."/>
            <person name="Fujita K."/>
            <person name="Isono K."/>
            <person name="Choi S."/>
            <person name="Ohtsubo E."/>
            <person name="Baba T."/>
            <person name="Wanner B.L."/>
            <person name="Mori H."/>
            <person name="Horiuchi T."/>
        </authorList>
    </citation>
    <scope>NUCLEOTIDE SEQUENCE [LARGE SCALE GENOMIC DNA]</scope>
    <source>
        <strain>K12 / W3110 / ATCC 27325 / DSM 5911</strain>
    </source>
</reference>
<reference key="5">
    <citation type="journal article" date="2005" name="Science">
        <title>Global topology analysis of the Escherichia coli inner membrane proteome.</title>
        <authorList>
            <person name="Daley D.O."/>
            <person name="Rapp M."/>
            <person name="Granseth E."/>
            <person name="Melen K."/>
            <person name="Drew D."/>
            <person name="von Heijne G."/>
        </authorList>
    </citation>
    <scope>TOPOLOGY [LARGE SCALE ANALYSIS]</scope>
    <source>
        <strain>K12 / MG1655 / ATCC 47076</strain>
    </source>
</reference>
<dbReference type="EMBL" id="U70214">
    <property type="protein sequence ID" value="AAB08587.1"/>
    <property type="molecule type" value="Genomic_DNA"/>
</dbReference>
<dbReference type="EMBL" id="U00096">
    <property type="protein sequence ID" value="AAC73268.1"/>
    <property type="molecule type" value="Genomic_DNA"/>
</dbReference>
<dbReference type="EMBL" id="AP009048">
    <property type="protein sequence ID" value="BAB96734.1"/>
    <property type="molecule type" value="Genomic_DNA"/>
</dbReference>
<dbReference type="PIR" id="S45226">
    <property type="entry name" value="S45226"/>
</dbReference>
<dbReference type="RefSeq" id="NP_414699.1">
    <property type="nucleotide sequence ID" value="NC_000913.3"/>
</dbReference>
<dbReference type="RefSeq" id="WP_000964221.1">
    <property type="nucleotide sequence ID" value="NZ_STEB01000032.1"/>
</dbReference>
<dbReference type="SMR" id="P0AFP0"/>
<dbReference type="BioGRID" id="4261385">
    <property type="interactions" value="28"/>
</dbReference>
<dbReference type="FunCoup" id="P0AFP0">
    <property type="interactions" value="290"/>
</dbReference>
<dbReference type="IntAct" id="P0AFP0">
    <property type="interactions" value="1"/>
</dbReference>
<dbReference type="STRING" id="511145.b0157"/>
<dbReference type="jPOST" id="P0AFP0"/>
<dbReference type="PaxDb" id="511145-b0157"/>
<dbReference type="EnsemblBacteria" id="AAC73268">
    <property type="protein sequence ID" value="AAC73268"/>
    <property type="gene ID" value="b0157"/>
</dbReference>
<dbReference type="GeneID" id="949062"/>
<dbReference type="KEGG" id="ecj:JW0153"/>
<dbReference type="KEGG" id="eco:b0157"/>
<dbReference type="KEGG" id="ecoc:C3026_00715"/>
<dbReference type="PATRIC" id="fig|1411691.4.peg.2123"/>
<dbReference type="EchoBASE" id="EB2237"/>
<dbReference type="eggNOG" id="COG2860">
    <property type="taxonomic scope" value="Bacteria"/>
</dbReference>
<dbReference type="HOGENOM" id="CLU_064906_2_1_6"/>
<dbReference type="InParanoid" id="P0AFP0"/>
<dbReference type="OMA" id="DRRPFYW"/>
<dbReference type="OrthoDB" id="9791874at2"/>
<dbReference type="PhylomeDB" id="P0AFP0"/>
<dbReference type="BioCyc" id="EcoCyc:EG12333-MONOMER"/>
<dbReference type="PRO" id="PR:P0AFP0"/>
<dbReference type="Proteomes" id="UP000000625">
    <property type="component" value="Chromosome"/>
</dbReference>
<dbReference type="GO" id="GO:0005886">
    <property type="term" value="C:plasma membrane"/>
    <property type="evidence" value="ECO:0000314"/>
    <property type="project" value="EcoCyc"/>
</dbReference>
<dbReference type="InterPro" id="IPR005115">
    <property type="entry name" value="Gly_transporter"/>
</dbReference>
<dbReference type="NCBIfam" id="NF007874">
    <property type="entry name" value="PRK10578.1"/>
    <property type="match status" value="1"/>
</dbReference>
<dbReference type="PANTHER" id="PTHR30506">
    <property type="entry name" value="INNER MEMBRANE PROTEIN"/>
    <property type="match status" value="1"/>
</dbReference>
<dbReference type="PANTHER" id="PTHR30506:SF3">
    <property type="entry name" value="UPF0126 INNER MEMBRANE PROTEIN YADS-RELATED"/>
    <property type="match status" value="1"/>
</dbReference>
<dbReference type="Pfam" id="PF03458">
    <property type="entry name" value="Gly_transporter"/>
    <property type="match status" value="2"/>
</dbReference>
<accession>P0AFP0</accession>
<accession>P37027</accession>
<proteinExistence type="evidence at protein level"/>
<comment type="subcellular location">
    <subcellularLocation>
        <location>Cell inner membrane</location>
        <topology>Multi-pass membrane protein</topology>
    </subcellularLocation>
</comment>
<comment type="similarity">
    <text evidence="2">Belongs to the UPF0126 family.</text>
</comment>
<gene>
    <name type="primary">yadS</name>
    <name type="ordered locus">b0157</name>
    <name type="ordered locus">JW0153</name>
</gene>